<organism>
    <name type="scientific">Stenotrophomonas maltophilia (strain K279a)</name>
    <dbReference type="NCBI Taxonomy" id="522373"/>
    <lineage>
        <taxon>Bacteria</taxon>
        <taxon>Pseudomonadati</taxon>
        <taxon>Pseudomonadota</taxon>
        <taxon>Gammaproteobacteria</taxon>
        <taxon>Lysobacterales</taxon>
        <taxon>Lysobacteraceae</taxon>
        <taxon>Stenotrophomonas</taxon>
        <taxon>Stenotrophomonas maltophilia group</taxon>
    </lineage>
</organism>
<accession>B2FMX5</accession>
<proteinExistence type="inferred from homology"/>
<reference key="1">
    <citation type="journal article" date="2008" name="Genome Biol.">
        <title>The complete genome, comparative and functional analysis of Stenotrophomonas maltophilia reveals an organism heavily shielded by drug resistance determinants.</title>
        <authorList>
            <person name="Crossman L.C."/>
            <person name="Gould V.C."/>
            <person name="Dow J.M."/>
            <person name="Vernikos G.S."/>
            <person name="Okazaki A."/>
            <person name="Sebaihia M."/>
            <person name="Saunders D."/>
            <person name="Arrowsmith C."/>
            <person name="Carver T."/>
            <person name="Peters N."/>
            <person name="Adlem E."/>
            <person name="Kerhornou A."/>
            <person name="Lord A."/>
            <person name="Murphy L."/>
            <person name="Seeger K."/>
            <person name="Squares R."/>
            <person name="Rutter S."/>
            <person name="Quail M.A."/>
            <person name="Rajandream M.A."/>
            <person name="Harris D."/>
            <person name="Churcher C."/>
            <person name="Bentley S.D."/>
            <person name="Parkhill J."/>
            <person name="Thomson N.R."/>
            <person name="Avison M.B."/>
        </authorList>
    </citation>
    <scope>NUCLEOTIDE SEQUENCE [LARGE SCALE GENOMIC DNA]</scope>
    <source>
        <strain>K279a</strain>
    </source>
</reference>
<dbReference type="EMBL" id="AM743169">
    <property type="protein sequence ID" value="CAQ45496.1"/>
    <property type="molecule type" value="Genomic_DNA"/>
</dbReference>
<dbReference type="RefSeq" id="WP_005409231.1">
    <property type="nucleotide sequence ID" value="NC_010943.1"/>
</dbReference>
<dbReference type="SMR" id="B2FMX5"/>
<dbReference type="EnsemblBacteria" id="CAQ45496">
    <property type="protein sequence ID" value="CAQ45496"/>
    <property type="gene ID" value="Smlt1983"/>
</dbReference>
<dbReference type="GeneID" id="93833107"/>
<dbReference type="KEGG" id="sml:Smlt1983"/>
<dbReference type="eggNOG" id="COG0691">
    <property type="taxonomic scope" value="Bacteria"/>
</dbReference>
<dbReference type="HOGENOM" id="CLU_108953_3_0_6"/>
<dbReference type="Proteomes" id="UP000008840">
    <property type="component" value="Chromosome"/>
</dbReference>
<dbReference type="GO" id="GO:0005829">
    <property type="term" value="C:cytosol"/>
    <property type="evidence" value="ECO:0007669"/>
    <property type="project" value="TreeGrafter"/>
</dbReference>
<dbReference type="GO" id="GO:0003723">
    <property type="term" value="F:RNA binding"/>
    <property type="evidence" value="ECO:0007669"/>
    <property type="project" value="UniProtKB-UniRule"/>
</dbReference>
<dbReference type="GO" id="GO:0070929">
    <property type="term" value="P:trans-translation"/>
    <property type="evidence" value="ECO:0007669"/>
    <property type="project" value="UniProtKB-UniRule"/>
</dbReference>
<dbReference type="CDD" id="cd09294">
    <property type="entry name" value="SmpB"/>
    <property type="match status" value="1"/>
</dbReference>
<dbReference type="Gene3D" id="2.40.280.10">
    <property type="match status" value="1"/>
</dbReference>
<dbReference type="HAMAP" id="MF_00023">
    <property type="entry name" value="SmpB"/>
    <property type="match status" value="1"/>
</dbReference>
<dbReference type="InterPro" id="IPR023620">
    <property type="entry name" value="SmpB"/>
</dbReference>
<dbReference type="InterPro" id="IPR000037">
    <property type="entry name" value="SsrA-bd_prot"/>
</dbReference>
<dbReference type="InterPro" id="IPR020081">
    <property type="entry name" value="SsrA-bd_prot_CS"/>
</dbReference>
<dbReference type="NCBIfam" id="NF003843">
    <property type="entry name" value="PRK05422.1"/>
    <property type="match status" value="1"/>
</dbReference>
<dbReference type="NCBIfam" id="TIGR00086">
    <property type="entry name" value="smpB"/>
    <property type="match status" value="1"/>
</dbReference>
<dbReference type="PANTHER" id="PTHR30308:SF2">
    <property type="entry name" value="SSRA-BINDING PROTEIN"/>
    <property type="match status" value="1"/>
</dbReference>
<dbReference type="PANTHER" id="PTHR30308">
    <property type="entry name" value="TMRNA-BINDING COMPONENT OF TRANS-TRANSLATION TAGGING COMPLEX"/>
    <property type="match status" value="1"/>
</dbReference>
<dbReference type="Pfam" id="PF01668">
    <property type="entry name" value="SmpB"/>
    <property type="match status" value="1"/>
</dbReference>
<dbReference type="SUPFAM" id="SSF74982">
    <property type="entry name" value="Small protein B (SmpB)"/>
    <property type="match status" value="1"/>
</dbReference>
<dbReference type="PROSITE" id="PS01317">
    <property type="entry name" value="SSRP"/>
    <property type="match status" value="1"/>
</dbReference>
<evidence type="ECO:0000255" key="1">
    <source>
        <dbReference type="HAMAP-Rule" id="MF_00023"/>
    </source>
</evidence>
<comment type="function">
    <text evidence="1">Required for rescue of stalled ribosomes mediated by trans-translation. Binds to transfer-messenger RNA (tmRNA), required for stable association of tmRNA with ribosomes. tmRNA and SmpB together mimic tRNA shape, replacing the anticodon stem-loop with SmpB. tmRNA is encoded by the ssrA gene; the 2 termini fold to resemble tRNA(Ala) and it encodes a 'tag peptide', a short internal open reading frame. During trans-translation Ala-aminoacylated tmRNA acts like a tRNA, entering the A-site of stalled ribosomes, displacing the stalled mRNA. The ribosome then switches to translate the ORF on the tmRNA; the nascent peptide is terminated with the 'tag peptide' encoded by the tmRNA and targeted for degradation. The ribosome is freed to recommence translation, which seems to be the essential function of trans-translation.</text>
</comment>
<comment type="subcellular location">
    <subcellularLocation>
        <location evidence="1">Cytoplasm</location>
    </subcellularLocation>
    <text evidence="1">The tmRNA-SmpB complex associates with stalled 70S ribosomes.</text>
</comment>
<comment type="similarity">
    <text evidence="1">Belongs to the SmpB family.</text>
</comment>
<name>SSRP_STRMK</name>
<keyword id="KW-0963">Cytoplasm</keyword>
<keyword id="KW-1185">Reference proteome</keyword>
<keyword id="KW-0694">RNA-binding</keyword>
<sequence>MSKNSGKDKAKSATANKTIALNKRARHEYHIEERFEAGLALQGWEVKSIRAGRGNIIDAYAYVKHGEIFLIGAQITPLIQASTHVVANDRRERKLLLHRSEIDKLVGKVERDGYTIVPTAMYWSKNKIKLEVALAKGKQTHDKRDAAKDRDWAIEKQRVMRRGNRDA</sequence>
<gene>
    <name evidence="1" type="primary">smpB</name>
    <name type="ordered locus">Smlt1983</name>
</gene>
<protein>
    <recommendedName>
        <fullName evidence="1">SsrA-binding protein</fullName>
    </recommendedName>
    <alternativeName>
        <fullName evidence="1">Small protein B</fullName>
    </alternativeName>
</protein>
<feature type="chain" id="PRO_1000090190" description="SsrA-binding protein">
    <location>
        <begin position="1"/>
        <end position="167"/>
    </location>
</feature>